<evidence type="ECO:0000255" key="1">
    <source>
        <dbReference type="HAMAP-Rule" id="MF_00102"/>
    </source>
</evidence>
<evidence type="ECO:0000305" key="2"/>
<accession>B7LWM1</accession>
<proteinExistence type="inferred from homology"/>
<feature type="chain" id="PRO_1000117373" description="4-hydroxy-tetrahydrodipicolinate reductase">
    <location>
        <begin position="1"/>
        <end position="273"/>
    </location>
</feature>
<feature type="active site" description="Proton donor/acceptor" evidence="1">
    <location>
        <position position="159"/>
    </location>
</feature>
<feature type="active site" description="Proton donor" evidence="1">
    <location>
        <position position="163"/>
    </location>
</feature>
<feature type="binding site" evidence="1">
    <location>
        <begin position="12"/>
        <end position="17"/>
    </location>
    <ligand>
        <name>NAD(+)</name>
        <dbReference type="ChEBI" id="CHEBI:57540"/>
    </ligand>
</feature>
<feature type="binding site" evidence="1">
    <location>
        <position position="38"/>
    </location>
    <ligand>
        <name>NAD(+)</name>
        <dbReference type="ChEBI" id="CHEBI:57540"/>
    </ligand>
</feature>
<feature type="binding site" evidence="1">
    <location>
        <position position="39"/>
    </location>
    <ligand>
        <name>NADP(+)</name>
        <dbReference type="ChEBI" id="CHEBI:58349"/>
    </ligand>
</feature>
<feature type="binding site" evidence="1">
    <location>
        <begin position="102"/>
        <end position="104"/>
    </location>
    <ligand>
        <name>NAD(+)</name>
        <dbReference type="ChEBI" id="CHEBI:57540"/>
    </ligand>
</feature>
<feature type="binding site" evidence="1">
    <location>
        <begin position="126"/>
        <end position="129"/>
    </location>
    <ligand>
        <name>NAD(+)</name>
        <dbReference type="ChEBI" id="CHEBI:57540"/>
    </ligand>
</feature>
<feature type="binding site" evidence="1">
    <location>
        <position position="160"/>
    </location>
    <ligand>
        <name>(S)-2,3,4,5-tetrahydrodipicolinate</name>
        <dbReference type="ChEBI" id="CHEBI:16845"/>
    </ligand>
</feature>
<feature type="binding site" evidence="1">
    <location>
        <begin position="169"/>
        <end position="170"/>
    </location>
    <ligand>
        <name>(S)-2,3,4,5-tetrahydrodipicolinate</name>
        <dbReference type="ChEBI" id="CHEBI:16845"/>
    </ligand>
</feature>
<sequence length="273" mass="28789">MHDANIRVAIAGAGGRMGRQLIQAALGLEGVQLGAALEREGSSLLGSDAGELAGAGKTGVTVQSSLDAVKDDFDVFIDFTRPEGTLNHLAFCRQHGKGMVIGTTGFDDAGKQAIGEAAKDIAIVFAANFSVGVNVMLKLLEKAAKVMGDYTDIEIIEAHHRHKVDAPSGTALAMGEAIAHALDKDLKDCAVYSREGHTGERVPGTIGFATVRAGDIVGEHTAMFADIGERLEITHKASSRMTFANGAVRSALWLKGKDKGLFDMKDVLNLNYL</sequence>
<comment type="function">
    <text evidence="1">Catalyzes the conversion of 4-hydroxy-tetrahydrodipicolinate (HTPA) to tetrahydrodipicolinate.</text>
</comment>
<comment type="catalytic activity">
    <reaction evidence="1">
        <text>(S)-2,3,4,5-tetrahydrodipicolinate + NAD(+) + H2O = (2S,4S)-4-hydroxy-2,3,4,5-tetrahydrodipicolinate + NADH + H(+)</text>
        <dbReference type="Rhea" id="RHEA:35323"/>
        <dbReference type="ChEBI" id="CHEBI:15377"/>
        <dbReference type="ChEBI" id="CHEBI:15378"/>
        <dbReference type="ChEBI" id="CHEBI:16845"/>
        <dbReference type="ChEBI" id="CHEBI:57540"/>
        <dbReference type="ChEBI" id="CHEBI:57945"/>
        <dbReference type="ChEBI" id="CHEBI:67139"/>
        <dbReference type="EC" id="1.17.1.8"/>
    </reaction>
</comment>
<comment type="catalytic activity">
    <reaction evidence="1">
        <text>(S)-2,3,4,5-tetrahydrodipicolinate + NADP(+) + H2O = (2S,4S)-4-hydroxy-2,3,4,5-tetrahydrodipicolinate + NADPH + H(+)</text>
        <dbReference type="Rhea" id="RHEA:35331"/>
        <dbReference type="ChEBI" id="CHEBI:15377"/>
        <dbReference type="ChEBI" id="CHEBI:15378"/>
        <dbReference type="ChEBI" id="CHEBI:16845"/>
        <dbReference type="ChEBI" id="CHEBI:57783"/>
        <dbReference type="ChEBI" id="CHEBI:58349"/>
        <dbReference type="ChEBI" id="CHEBI:67139"/>
        <dbReference type="EC" id="1.17.1.8"/>
    </reaction>
</comment>
<comment type="pathway">
    <text evidence="1">Amino-acid biosynthesis; L-lysine biosynthesis via DAP pathway; (S)-tetrahydrodipicolinate from L-aspartate: step 4/4.</text>
</comment>
<comment type="subunit">
    <text evidence="1">Homotetramer.</text>
</comment>
<comment type="subcellular location">
    <subcellularLocation>
        <location evidence="1">Cytoplasm</location>
    </subcellularLocation>
</comment>
<comment type="similarity">
    <text evidence="1">Belongs to the DapB family.</text>
</comment>
<comment type="caution">
    <text evidence="2">Was originally thought to be a dihydrodipicolinate reductase (DHDPR), catalyzing the conversion of dihydrodipicolinate to tetrahydrodipicolinate. However, it was shown in E.coli that the substrate of the enzymatic reaction is not dihydrodipicolinate (DHDP) but in fact (2S,4S)-4-hydroxy-2,3,4,5-tetrahydrodipicolinic acid (HTPA), the product released by the DapA-catalyzed reaction.</text>
</comment>
<gene>
    <name evidence="1" type="primary">dapB</name>
    <name type="ordered locus">EFER_0038</name>
</gene>
<keyword id="KW-0028">Amino-acid biosynthesis</keyword>
<keyword id="KW-0963">Cytoplasm</keyword>
<keyword id="KW-0220">Diaminopimelate biosynthesis</keyword>
<keyword id="KW-0457">Lysine biosynthesis</keyword>
<keyword id="KW-0520">NAD</keyword>
<keyword id="KW-0521">NADP</keyword>
<keyword id="KW-0560">Oxidoreductase</keyword>
<name>DAPB_ESCF3</name>
<protein>
    <recommendedName>
        <fullName evidence="1">4-hydroxy-tetrahydrodipicolinate reductase</fullName>
        <shortName evidence="1">HTPA reductase</shortName>
        <ecNumber evidence="1">1.17.1.8</ecNumber>
    </recommendedName>
</protein>
<organism>
    <name type="scientific">Escherichia fergusonii (strain ATCC 35469 / DSM 13698 / CCUG 18766 / IAM 14443 / JCM 21226 / LMG 7866 / NBRC 102419 / NCTC 12128 / CDC 0568-73)</name>
    <dbReference type="NCBI Taxonomy" id="585054"/>
    <lineage>
        <taxon>Bacteria</taxon>
        <taxon>Pseudomonadati</taxon>
        <taxon>Pseudomonadota</taxon>
        <taxon>Gammaproteobacteria</taxon>
        <taxon>Enterobacterales</taxon>
        <taxon>Enterobacteriaceae</taxon>
        <taxon>Escherichia</taxon>
    </lineage>
</organism>
<reference key="1">
    <citation type="journal article" date="2009" name="PLoS Genet.">
        <title>Organised genome dynamics in the Escherichia coli species results in highly diverse adaptive paths.</title>
        <authorList>
            <person name="Touchon M."/>
            <person name="Hoede C."/>
            <person name="Tenaillon O."/>
            <person name="Barbe V."/>
            <person name="Baeriswyl S."/>
            <person name="Bidet P."/>
            <person name="Bingen E."/>
            <person name="Bonacorsi S."/>
            <person name="Bouchier C."/>
            <person name="Bouvet O."/>
            <person name="Calteau A."/>
            <person name="Chiapello H."/>
            <person name="Clermont O."/>
            <person name="Cruveiller S."/>
            <person name="Danchin A."/>
            <person name="Diard M."/>
            <person name="Dossat C."/>
            <person name="Karoui M.E."/>
            <person name="Frapy E."/>
            <person name="Garry L."/>
            <person name="Ghigo J.M."/>
            <person name="Gilles A.M."/>
            <person name="Johnson J."/>
            <person name="Le Bouguenec C."/>
            <person name="Lescat M."/>
            <person name="Mangenot S."/>
            <person name="Martinez-Jehanne V."/>
            <person name="Matic I."/>
            <person name="Nassif X."/>
            <person name="Oztas S."/>
            <person name="Petit M.A."/>
            <person name="Pichon C."/>
            <person name="Rouy Z."/>
            <person name="Ruf C.S."/>
            <person name="Schneider D."/>
            <person name="Tourret J."/>
            <person name="Vacherie B."/>
            <person name="Vallenet D."/>
            <person name="Medigue C."/>
            <person name="Rocha E.P.C."/>
            <person name="Denamur E."/>
        </authorList>
    </citation>
    <scope>NUCLEOTIDE SEQUENCE [LARGE SCALE GENOMIC DNA]</scope>
    <source>
        <strain>ATCC 35469 / DSM 13698 / BCRC 15582 / CCUG 18766 / IAM 14443 / JCM 21226 / LMG 7866 / NBRC 102419 / NCTC 12128 / CDC 0568-73</strain>
    </source>
</reference>
<dbReference type="EC" id="1.17.1.8" evidence="1"/>
<dbReference type="EMBL" id="CU928158">
    <property type="protein sequence ID" value="CAQ87624.1"/>
    <property type="molecule type" value="Genomic_DNA"/>
</dbReference>
<dbReference type="RefSeq" id="WP_000543619.1">
    <property type="nucleotide sequence ID" value="NC_011740.1"/>
</dbReference>
<dbReference type="SMR" id="B7LWM1"/>
<dbReference type="GeneID" id="75058874"/>
<dbReference type="KEGG" id="efe:EFER_0038"/>
<dbReference type="HOGENOM" id="CLU_047479_2_1_6"/>
<dbReference type="OrthoDB" id="9790352at2"/>
<dbReference type="UniPathway" id="UPA00034">
    <property type="reaction ID" value="UER00018"/>
</dbReference>
<dbReference type="Proteomes" id="UP000000745">
    <property type="component" value="Chromosome"/>
</dbReference>
<dbReference type="GO" id="GO:0005829">
    <property type="term" value="C:cytosol"/>
    <property type="evidence" value="ECO:0007669"/>
    <property type="project" value="TreeGrafter"/>
</dbReference>
<dbReference type="GO" id="GO:0008839">
    <property type="term" value="F:4-hydroxy-tetrahydrodipicolinate reductase"/>
    <property type="evidence" value="ECO:0007669"/>
    <property type="project" value="UniProtKB-EC"/>
</dbReference>
<dbReference type="GO" id="GO:0051287">
    <property type="term" value="F:NAD binding"/>
    <property type="evidence" value="ECO:0007669"/>
    <property type="project" value="UniProtKB-UniRule"/>
</dbReference>
<dbReference type="GO" id="GO:0050661">
    <property type="term" value="F:NADP binding"/>
    <property type="evidence" value="ECO:0007669"/>
    <property type="project" value="UniProtKB-UniRule"/>
</dbReference>
<dbReference type="GO" id="GO:0016726">
    <property type="term" value="F:oxidoreductase activity, acting on CH or CH2 groups, NAD or NADP as acceptor"/>
    <property type="evidence" value="ECO:0007669"/>
    <property type="project" value="UniProtKB-UniRule"/>
</dbReference>
<dbReference type="GO" id="GO:0019877">
    <property type="term" value="P:diaminopimelate biosynthetic process"/>
    <property type="evidence" value="ECO:0007669"/>
    <property type="project" value="UniProtKB-UniRule"/>
</dbReference>
<dbReference type="GO" id="GO:0009089">
    <property type="term" value="P:lysine biosynthetic process via diaminopimelate"/>
    <property type="evidence" value="ECO:0007669"/>
    <property type="project" value="UniProtKB-UniRule"/>
</dbReference>
<dbReference type="CDD" id="cd02274">
    <property type="entry name" value="DHDPR_N"/>
    <property type="match status" value="1"/>
</dbReference>
<dbReference type="FunFam" id="3.30.360.10:FF:000004">
    <property type="entry name" value="4-hydroxy-tetrahydrodipicolinate reductase"/>
    <property type="match status" value="1"/>
</dbReference>
<dbReference type="FunFam" id="3.40.50.720:FF:000048">
    <property type="entry name" value="4-hydroxy-tetrahydrodipicolinate reductase"/>
    <property type="match status" value="1"/>
</dbReference>
<dbReference type="Gene3D" id="3.30.360.10">
    <property type="entry name" value="Dihydrodipicolinate Reductase, domain 2"/>
    <property type="match status" value="1"/>
</dbReference>
<dbReference type="Gene3D" id="3.40.50.720">
    <property type="entry name" value="NAD(P)-binding Rossmann-like Domain"/>
    <property type="match status" value="1"/>
</dbReference>
<dbReference type="HAMAP" id="MF_00102">
    <property type="entry name" value="DapB"/>
    <property type="match status" value="1"/>
</dbReference>
<dbReference type="InterPro" id="IPR022663">
    <property type="entry name" value="DapB_C"/>
</dbReference>
<dbReference type="InterPro" id="IPR000846">
    <property type="entry name" value="DapB_N"/>
</dbReference>
<dbReference type="InterPro" id="IPR022664">
    <property type="entry name" value="DapB_N_CS"/>
</dbReference>
<dbReference type="InterPro" id="IPR023940">
    <property type="entry name" value="DHDPR_bac"/>
</dbReference>
<dbReference type="InterPro" id="IPR036291">
    <property type="entry name" value="NAD(P)-bd_dom_sf"/>
</dbReference>
<dbReference type="NCBIfam" id="TIGR00036">
    <property type="entry name" value="dapB"/>
    <property type="match status" value="1"/>
</dbReference>
<dbReference type="PANTHER" id="PTHR20836:SF0">
    <property type="entry name" value="4-HYDROXY-TETRAHYDRODIPICOLINATE REDUCTASE 1, CHLOROPLASTIC-RELATED"/>
    <property type="match status" value="1"/>
</dbReference>
<dbReference type="PANTHER" id="PTHR20836">
    <property type="entry name" value="DIHYDRODIPICOLINATE REDUCTASE"/>
    <property type="match status" value="1"/>
</dbReference>
<dbReference type="Pfam" id="PF05173">
    <property type="entry name" value="DapB_C"/>
    <property type="match status" value="1"/>
</dbReference>
<dbReference type="Pfam" id="PF01113">
    <property type="entry name" value="DapB_N"/>
    <property type="match status" value="1"/>
</dbReference>
<dbReference type="PIRSF" id="PIRSF000161">
    <property type="entry name" value="DHPR"/>
    <property type="match status" value="1"/>
</dbReference>
<dbReference type="SUPFAM" id="SSF55347">
    <property type="entry name" value="Glyceraldehyde-3-phosphate dehydrogenase-like, C-terminal domain"/>
    <property type="match status" value="1"/>
</dbReference>
<dbReference type="SUPFAM" id="SSF51735">
    <property type="entry name" value="NAD(P)-binding Rossmann-fold domains"/>
    <property type="match status" value="1"/>
</dbReference>
<dbReference type="PROSITE" id="PS01298">
    <property type="entry name" value="DAPB"/>
    <property type="match status" value="1"/>
</dbReference>